<protein>
    <recommendedName>
        <fullName>Actin-related protein 2</fullName>
    </recommendedName>
    <alternativeName>
        <fullName>Actin-like protein ARP2</fullName>
        <shortName>Actin-like protein 2</shortName>
    </alternativeName>
</protein>
<evidence type="ECO:0000250" key="1"/>
<evidence type="ECO:0000269" key="2">
    <source>
    </source>
</evidence>
<evidence type="ECO:0000269" key="3">
    <source>
    </source>
</evidence>
<evidence type="ECO:0000269" key="4">
    <source>
    </source>
</evidence>
<evidence type="ECO:0000305" key="5"/>
<evidence type="ECO:0007744" key="6">
    <source>
    </source>
</evidence>
<feature type="chain" id="PRO_0000089077" description="Actin-related protein 2">
    <location>
        <begin position="1"/>
        <end position="391"/>
    </location>
</feature>
<feature type="binding site" evidence="1">
    <location>
        <begin position="159"/>
        <end position="161"/>
    </location>
    <ligand>
        <name>ATP</name>
        <dbReference type="ChEBI" id="CHEBI:30616"/>
    </ligand>
</feature>
<feature type="binding site" evidence="1">
    <location>
        <begin position="213"/>
        <end position="217"/>
    </location>
    <ligand>
        <name>ATP</name>
        <dbReference type="ChEBI" id="CHEBI:30616"/>
    </ligand>
</feature>
<feature type="binding site" evidence="1">
    <location>
        <begin position="304"/>
        <end position="309"/>
    </location>
    <ligand>
        <name>ATP</name>
        <dbReference type="ChEBI" id="CHEBI:30616"/>
    </ligand>
</feature>
<feature type="modified residue" description="N-acetylmethionine" evidence="6">
    <location>
        <position position="1"/>
    </location>
</feature>
<proteinExistence type="evidence at protein level"/>
<keyword id="KW-0007">Acetylation</keyword>
<keyword id="KW-0009">Actin-binding</keyword>
<keyword id="KW-0067">ATP-binding</keyword>
<keyword id="KW-0963">Cytoplasm</keyword>
<keyword id="KW-0206">Cytoskeleton</keyword>
<keyword id="KW-0547">Nucleotide-binding</keyword>
<keyword id="KW-1185">Reference proteome</keyword>
<organism>
    <name type="scientific">Saccharomyces cerevisiae (strain ATCC 204508 / S288c)</name>
    <name type="common">Baker's yeast</name>
    <dbReference type="NCBI Taxonomy" id="559292"/>
    <lineage>
        <taxon>Eukaryota</taxon>
        <taxon>Fungi</taxon>
        <taxon>Dikarya</taxon>
        <taxon>Ascomycota</taxon>
        <taxon>Saccharomycotina</taxon>
        <taxon>Saccharomycetes</taxon>
        <taxon>Saccharomycetales</taxon>
        <taxon>Saccharomycetaceae</taxon>
        <taxon>Saccharomyces</taxon>
    </lineage>
</organism>
<reference key="1">
    <citation type="journal article" date="1992" name="Nature">
        <title>New yeast actin-like gene required late in the cell cycle.</title>
        <authorList>
            <person name="Schwob E."/>
            <person name="Martin R.P."/>
        </authorList>
    </citation>
    <scope>NUCLEOTIDE SEQUENCE [GENOMIC DNA]</scope>
    <source>
        <strain>ATCC 26109 / X2180</strain>
    </source>
</reference>
<reference key="2">
    <citation type="journal article" date="1997" name="Nature">
        <title>The nucleotide sequence of Saccharomyces cerevisiae chromosome IV.</title>
        <authorList>
            <person name="Jacq C."/>
            <person name="Alt-Moerbe J."/>
            <person name="Andre B."/>
            <person name="Arnold W."/>
            <person name="Bahr A."/>
            <person name="Ballesta J.P.G."/>
            <person name="Bargues M."/>
            <person name="Baron L."/>
            <person name="Becker A."/>
            <person name="Biteau N."/>
            <person name="Bloecker H."/>
            <person name="Blugeon C."/>
            <person name="Boskovic J."/>
            <person name="Brandt P."/>
            <person name="Brueckner M."/>
            <person name="Buitrago M.J."/>
            <person name="Coster F."/>
            <person name="Delaveau T."/>
            <person name="del Rey F."/>
            <person name="Dujon B."/>
            <person name="Eide L.G."/>
            <person name="Garcia-Cantalejo J.M."/>
            <person name="Goffeau A."/>
            <person name="Gomez-Peris A."/>
            <person name="Granotier C."/>
            <person name="Hanemann V."/>
            <person name="Hankeln T."/>
            <person name="Hoheisel J.D."/>
            <person name="Jaeger W."/>
            <person name="Jimenez A."/>
            <person name="Jonniaux J.-L."/>
            <person name="Kraemer C."/>
            <person name="Kuester H."/>
            <person name="Laamanen P."/>
            <person name="Legros Y."/>
            <person name="Louis E.J."/>
            <person name="Moeller-Rieker S."/>
            <person name="Monnet A."/>
            <person name="Moro M."/>
            <person name="Mueller-Auer S."/>
            <person name="Nussbaumer B."/>
            <person name="Paricio N."/>
            <person name="Paulin L."/>
            <person name="Perea J."/>
            <person name="Perez-Alonso M."/>
            <person name="Perez-Ortin J.E."/>
            <person name="Pohl T.M."/>
            <person name="Prydz H."/>
            <person name="Purnelle B."/>
            <person name="Rasmussen S.W."/>
            <person name="Remacha M.A."/>
            <person name="Revuelta J.L."/>
            <person name="Rieger M."/>
            <person name="Salom D."/>
            <person name="Saluz H.P."/>
            <person name="Saiz J.E."/>
            <person name="Saren A.-M."/>
            <person name="Schaefer M."/>
            <person name="Scharfe M."/>
            <person name="Schmidt E.R."/>
            <person name="Schneider C."/>
            <person name="Scholler P."/>
            <person name="Schwarz S."/>
            <person name="Soler-Mira A."/>
            <person name="Urrestarazu L.A."/>
            <person name="Verhasselt P."/>
            <person name="Vissers S."/>
            <person name="Voet M."/>
            <person name="Volckaert G."/>
            <person name="Wagner G."/>
            <person name="Wambutt R."/>
            <person name="Wedler E."/>
            <person name="Wedler H."/>
            <person name="Woelfl S."/>
            <person name="Harris D.E."/>
            <person name="Bowman S."/>
            <person name="Brown D."/>
            <person name="Churcher C.M."/>
            <person name="Connor R."/>
            <person name="Dedman K."/>
            <person name="Gentles S."/>
            <person name="Hamlin N."/>
            <person name="Hunt S."/>
            <person name="Jones L."/>
            <person name="McDonald S."/>
            <person name="Murphy L.D."/>
            <person name="Niblett D."/>
            <person name="Odell C."/>
            <person name="Oliver K."/>
            <person name="Rajandream M.A."/>
            <person name="Richards C."/>
            <person name="Shore L."/>
            <person name="Walsh S.V."/>
            <person name="Barrell B.G."/>
            <person name="Dietrich F.S."/>
            <person name="Mulligan J.T."/>
            <person name="Allen E."/>
            <person name="Araujo R."/>
            <person name="Aviles E."/>
            <person name="Berno A."/>
            <person name="Carpenter J."/>
            <person name="Chen E."/>
            <person name="Cherry J.M."/>
            <person name="Chung E."/>
            <person name="Duncan M."/>
            <person name="Hunicke-Smith S."/>
            <person name="Hyman R.W."/>
            <person name="Komp C."/>
            <person name="Lashkari D."/>
            <person name="Lew H."/>
            <person name="Lin D."/>
            <person name="Mosedale D."/>
            <person name="Nakahara K."/>
            <person name="Namath A."/>
            <person name="Oefner P."/>
            <person name="Oh C."/>
            <person name="Petel F.X."/>
            <person name="Roberts D."/>
            <person name="Schramm S."/>
            <person name="Schroeder M."/>
            <person name="Shogren T."/>
            <person name="Shroff N."/>
            <person name="Winant A."/>
            <person name="Yelton M.A."/>
            <person name="Botstein D."/>
            <person name="Davis R.W."/>
            <person name="Johnston M."/>
            <person name="Andrews S."/>
            <person name="Brinkman R."/>
            <person name="Cooper J."/>
            <person name="Ding H."/>
            <person name="Du Z."/>
            <person name="Favello A."/>
            <person name="Fulton L."/>
            <person name="Gattung S."/>
            <person name="Greco T."/>
            <person name="Hallsworth K."/>
            <person name="Hawkins J."/>
            <person name="Hillier L.W."/>
            <person name="Jier M."/>
            <person name="Johnson D."/>
            <person name="Johnston L."/>
            <person name="Kirsten J."/>
            <person name="Kucaba T."/>
            <person name="Langston Y."/>
            <person name="Latreille P."/>
            <person name="Le T."/>
            <person name="Mardis E."/>
            <person name="Menezes S."/>
            <person name="Miller N."/>
            <person name="Nhan M."/>
            <person name="Pauley A."/>
            <person name="Peluso D."/>
            <person name="Rifkin L."/>
            <person name="Riles L."/>
            <person name="Taich A."/>
            <person name="Trevaskis E."/>
            <person name="Vignati D."/>
            <person name="Wilcox L."/>
            <person name="Wohldman P."/>
            <person name="Vaudin M."/>
            <person name="Wilson R."/>
            <person name="Waterston R."/>
            <person name="Albermann K."/>
            <person name="Hani J."/>
            <person name="Heumann K."/>
            <person name="Kleine K."/>
            <person name="Mewes H.-W."/>
            <person name="Zollner A."/>
            <person name="Zaccaria P."/>
        </authorList>
    </citation>
    <scope>NUCLEOTIDE SEQUENCE [LARGE SCALE GENOMIC DNA]</scope>
    <source>
        <strain>ATCC 204508 / S288c</strain>
    </source>
</reference>
<reference key="3">
    <citation type="journal article" date="2014" name="G3 (Bethesda)">
        <title>The reference genome sequence of Saccharomyces cerevisiae: Then and now.</title>
        <authorList>
            <person name="Engel S.R."/>
            <person name="Dietrich F.S."/>
            <person name="Fisk D.G."/>
            <person name="Binkley G."/>
            <person name="Balakrishnan R."/>
            <person name="Costanzo M.C."/>
            <person name="Dwight S.S."/>
            <person name="Hitz B.C."/>
            <person name="Karra K."/>
            <person name="Nash R.S."/>
            <person name="Weng S."/>
            <person name="Wong E.D."/>
            <person name="Lloyd P."/>
            <person name="Skrzypek M.S."/>
            <person name="Miyasato S.R."/>
            <person name="Simison M."/>
            <person name="Cherry J.M."/>
        </authorList>
    </citation>
    <scope>GENOME REANNOTATION</scope>
    <source>
        <strain>ATCC 204508 / S288c</strain>
    </source>
</reference>
<reference key="4">
    <citation type="journal article" date="1997" name="Curr. Biol.">
        <title>The complex containing actin-related proteins Arp2 and Arp3 is required for the motility and integrity of yeast actin patches.</title>
        <authorList>
            <person name="Winter D."/>
            <person name="Podtelejnikov A.V."/>
            <person name="Mann M."/>
            <person name="Li R."/>
        </authorList>
    </citation>
    <scope>IDENTIFICATION IN THE ARP2/3 COMPLEX</scope>
    <scope>SUBCELLULAR LOCATION</scope>
</reference>
<reference key="5">
    <citation type="journal article" date="1997" name="Curr. Biol.">
        <authorList>
            <person name="Winter D."/>
            <person name="Podtelejnikov A.V."/>
            <person name="Mann M."/>
            <person name="Li R."/>
        </authorList>
    </citation>
    <scope>ERRATUM OF PUBMED:9210376</scope>
</reference>
<reference key="6">
    <citation type="journal article" date="2001" name="Proc. Natl. Acad. Sci. U.S.A.">
        <title>Arp2/3 complex and actin dynamics are required for actin-based mitochondrial motility in yeast.</title>
        <authorList>
            <person name="Boldogh I.R."/>
            <person name="Yang H.C."/>
            <person name="Nowakowski W.D."/>
            <person name="Karmon S.L."/>
            <person name="Hays L.G."/>
            <person name="Yates J.R. III"/>
            <person name="Pon L.A."/>
        </authorList>
    </citation>
    <scope>SUBCELLULAR LOCATION</scope>
</reference>
<reference key="7">
    <citation type="journal article" date="2003" name="Nature">
        <title>Global analysis of protein expression in yeast.</title>
        <authorList>
            <person name="Ghaemmaghami S."/>
            <person name="Huh W.-K."/>
            <person name="Bower K."/>
            <person name="Howson R.W."/>
            <person name="Belle A."/>
            <person name="Dephoure N."/>
            <person name="O'Shea E.K."/>
            <person name="Weissman J.S."/>
        </authorList>
    </citation>
    <scope>LEVEL OF PROTEIN EXPRESSION [LARGE SCALE ANALYSIS]</scope>
</reference>
<reference key="8">
    <citation type="journal article" date="2008" name="Mol. Cell. Proteomics">
        <title>A multidimensional chromatography technology for in-depth phosphoproteome analysis.</title>
        <authorList>
            <person name="Albuquerque C.P."/>
            <person name="Smolka M.B."/>
            <person name="Payne S.H."/>
            <person name="Bafna V."/>
            <person name="Eng J."/>
            <person name="Zhou H."/>
        </authorList>
    </citation>
    <scope>IDENTIFICATION BY MASS SPECTROMETRY [LARGE SCALE ANALYSIS]</scope>
</reference>
<reference key="9">
    <citation type="journal article" date="2009" name="Science">
        <title>Global analysis of Cdk1 substrate phosphorylation sites provides insights into evolution.</title>
        <authorList>
            <person name="Holt L.J."/>
            <person name="Tuch B.B."/>
            <person name="Villen J."/>
            <person name="Johnson A.D."/>
            <person name="Gygi S.P."/>
            <person name="Morgan D.O."/>
        </authorList>
    </citation>
    <scope>IDENTIFICATION BY MASS SPECTROMETRY [LARGE SCALE ANALYSIS]</scope>
</reference>
<reference key="10">
    <citation type="journal article" date="2012" name="Proc. Natl. Acad. Sci. U.S.A.">
        <title>N-terminal acetylome analyses and functional insights of the N-terminal acetyltransferase NatB.</title>
        <authorList>
            <person name="Van Damme P."/>
            <person name="Lasa M."/>
            <person name="Polevoda B."/>
            <person name="Gazquez C."/>
            <person name="Elosegui-Artola A."/>
            <person name="Kim D.S."/>
            <person name="De Juan-Pardo E."/>
            <person name="Demeyer K."/>
            <person name="Hole K."/>
            <person name="Larrea E."/>
            <person name="Timmerman E."/>
            <person name="Prieto J."/>
            <person name="Arnesen T."/>
            <person name="Sherman F."/>
            <person name="Gevaert K."/>
            <person name="Aldabe R."/>
        </authorList>
    </citation>
    <scope>ACETYLATION [LARGE SCALE ANALYSIS] AT MET-1</scope>
    <scope>IDENTIFICATION BY MASS SPECTROMETRY [LARGE SCALE ANALYSIS]</scope>
</reference>
<name>ARP2_YEAST</name>
<dbReference type="EMBL" id="X61502">
    <property type="protein sequence ID" value="CAA43718.1"/>
    <property type="molecule type" value="Genomic_DNA"/>
</dbReference>
<dbReference type="EMBL" id="Z71781">
    <property type="protein sequence ID" value="CAA96460.1"/>
    <property type="molecule type" value="Genomic_DNA"/>
</dbReference>
<dbReference type="EMBL" id="Z74077">
    <property type="protein sequence ID" value="CAA98588.1"/>
    <property type="molecule type" value="Genomic_DNA"/>
</dbReference>
<dbReference type="EMBL" id="BK006938">
    <property type="protein sequence ID" value="DAA11823.1"/>
    <property type="molecule type" value="Genomic_DNA"/>
</dbReference>
<dbReference type="PIR" id="S20225">
    <property type="entry name" value="S20225"/>
</dbReference>
<dbReference type="RefSeq" id="NP_010255.1">
    <property type="nucleotide sequence ID" value="NM_001180088.1"/>
</dbReference>
<dbReference type="SMR" id="P32381"/>
<dbReference type="BioGRID" id="32027">
    <property type="interactions" value="413"/>
</dbReference>
<dbReference type="ComplexPortal" id="CPX-607">
    <property type="entry name" value="Actin-related protein 2/3 complex"/>
</dbReference>
<dbReference type="DIP" id="DIP-2217N"/>
<dbReference type="FunCoup" id="P32381">
    <property type="interactions" value="1308"/>
</dbReference>
<dbReference type="IntAct" id="P32381">
    <property type="interactions" value="107"/>
</dbReference>
<dbReference type="MINT" id="P32381"/>
<dbReference type="STRING" id="4932.YDL029W"/>
<dbReference type="iPTMnet" id="P32381"/>
<dbReference type="PaxDb" id="4932-YDL029W"/>
<dbReference type="PeptideAtlas" id="P32381"/>
<dbReference type="EnsemblFungi" id="YDL029W_mRNA">
    <property type="protein sequence ID" value="YDL029W"/>
    <property type="gene ID" value="YDL029W"/>
</dbReference>
<dbReference type="GeneID" id="851532"/>
<dbReference type="KEGG" id="sce:YDL029W"/>
<dbReference type="AGR" id="SGD:S000002187"/>
<dbReference type="SGD" id="S000002187">
    <property type="gene designation" value="ARP2"/>
</dbReference>
<dbReference type="VEuPathDB" id="FungiDB:YDL029W"/>
<dbReference type="eggNOG" id="KOG0677">
    <property type="taxonomic scope" value="Eukaryota"/>
</dbReference>
<dbReference type="HOGENOM" id="CLU_027965_0_2_1"/>
<dbReference type="InParanoid" id="P32381"/>
<dbReference type="OMA" id="WEDMQHL"/>
<dbReference type="OrthoDB" id="5132116at2759"/>
<dbReference type="BioCyc" id="YEAST:G3O-29455-MONOMER"/>
<dbReference type="Reactome" id="R-SCE-2029482">
    <property type="pathway name" value="Regulation of actin dynamics for phagocytic cup formation"/>
</dbReference>
<dbReference type="Reactome" id="R-SCE-5663213">
    <property type="pathway name" value="RHO GTPases Activate WASPs and WAVEs"/>
</dbReference>
<dbReference type="Reactome" id="R-SCE-6798695">
    <property type="pathway name" value="Neutrophil degranulation"/>
</dbReference>
<dbReference type="BioGRID-ORCS" id="851532">
    <property type="hits" value="3 hits in 10 CRISPR screens"/>
</dbReference>
<dbReference type="PRO" id="PR:P32381"/>
<dbReference type="Proteomes" id="UP000002311">
    <property type="component" value="Chromosome IV"/>
</dbReference>
<dbReference type="RNAct" id="P32381">
    <property type="molecule type" value="protein"/>
</dbReference>
<dbReference type="GO" id="GO:0030479">
    <property type="term" value="C:actin cortical patch"/>
    <property type="evidence" value="ECO:0007669"/>
    <property type="project" value="UniProtKB-SubCell"/>
</dbReference>
<dbReference type="GO" id="GO:0015629">
    <property type="term" value="C:actin cytoskeleton"/>
    <property type="evidence" value="ECO:0000303"/>
    <property type="project" value="ComplexPortal"/>
</dbReference>
<dbReference type="GO" id="GO:0005885">
    <property type="term" value="C:Arp2/3 protein complex"/>
    <property type="evidence" value="ECO:0000314"/>
    <property type="project" value="SGD"/>
</dbReference>
<dbReference type="GO" id="GO:0005938">
    <property type="term" value="C:cell cortex"/>
    <property type="evidence" value="ECO:0000318"/>
    <property type="project" value="GO_Central"/>
</dbReference>
<dbReference type="GO" id="GO:0003779">
    <property type="term" value="F:actin binding"/>
    <property type="evidence" value="ECO:0007669"/>
    <property type="project" value="UniProtKB-KW"/>
</dbReference>
<dbReference type="GO" id="GO:0005524">
    <property type="term" value="F:ATP binding"/>
    <property type="evidence" value="ECO:0000314"/>
    <property type="project" value="SGD"/>
</dbReference>
<dbReference type="GO" id="GO:0016887">
    <property type="term" value="F:ATP hydrolysis activity"/>
    <property type="evidence" value="ECO:0000315"/>
    <property type="project" value="SGD"/>
</dbReference>
<dbReference type="GO" id="GO:0044396">
    <property type="term" value="P:actin cortical patch organization"/>
    <property type="evidence" value="ECO:0000315"/>
    <property type="project" value="SGD"/>
</dbReference>
<dbReference type="GO" id="GO:0045010">
    <property type="term" value="P:actin nucleation"/>
    <property type="evidence" value="ECO:0000303"/>
    <property type="project" value="ComplexPortal"/>
</dbReference>
<dbReference type="GO" id="GO:0034314">
    <property type="term" value="P:Arp2/3 complex-mediated actin nucleation"/>
    <property type="evidence" value="ECO:0000315"/>
    <property type="project" value="SGD"/>
</dbReference>
<dbReference type="GO" id="GO:0030476">
    <property type="term" value="P:ascospore wall assembly"/>
    <property type="evidence" value="ECO:0000315"/>
    <property type="project" value="SGD"/>
</dbReference>
<dbReference type="GO" id="GO:0032258">
    <property type="term" value="P:cytoplasm to vacuole targeting by the Cvt pathway"/>
    <property type="evidence" value="ECO:0000315"/>
    <property type="project" value="SGD"/>
</dbReference>
<dbReference type="GO" id="GO:0051654">
    <property type="term" value="P:establishment of mitochondrion localization"/>
    <property type="evidence" value="ECO:0000315"/>
    <property type="project" value="SGD"/>
</dbReference>
<dbReference type="GO" id="GO:0000001">
    <property type="term" value="P:mitochondrion inheritance"/>
    <property type="evidence" value="ECO:0000315"/>
    <property type="project" value="SGD"/>
</dbReference>
<dbReference type="CDD" id="cd10220">
    <property type="entry name" value="ASKHA_NBD_Arp2"/>
    <property type="match status" value="1"/>
</dbReference>
<dbReference type="FunFam" id="3.30.420.40:FF:000050">
    <property type="entry name" value="Actin, alpha skeletal muscle"/>
    <property type="match status" value="1"/>
</dbReference>
<dbReference type="FunFam" id="3.90.640.10:FF:000005">
    <property type="entry name" value="Actin-related protein 2"/>
    <property type="match status" value="1"/>
</dbReference>
<dbReference type="Gene3D" id="3.30.420.40">
    <property type="match status" value="2"/>
</dbReference>
<dbReference type="Gene3D" id="3.90.640.10">
    <property type="entry name" value="Actin, Chain A, domain 4"/>
    <property type="match status" value="1"/>
</dbReference>
<dbReference type="InterPro" id="IPR004000">
    <property type="entry name" value="Actin"/>
</dbReference>
<dbReference type="InterPro" id="IPR020902">
    <property type="entry name" value="Actin/actin-like_CS"/>
</dbReference>
<dbReference type="InterPro" id="IPR043129">
    <property type="entry name" value="ATPase_NBD"/>
</dbReference>
<dbReference type="PANTHER" id="PTHR11937">
    <property type="entry name" value="ACTIN"/>
    <property type="match status" value="1"/>
</dbReference>
<dbReference type="Pfam" id="PF00022">
    <property type="entry name" value="Actin"/>
    <property type="match status" value="1"/>
</dbReference>
<dbReference type="PRINTS" id="PR00190">
    <property type="entry name" value="ACTIN"/>
</dbReference>
<dbReference type="SMART" id="SM00268">
    <property type="entry name" value="ACTIN"/>
    <property type="match status" value="1"/>
</dbReference>
<dbReference type="SUPFAM" id="SSF53067">
    <property type="entry name" value="Actin-like ATPase domain"/>
    <property type="match status" value="2"/>
</dbReference>
<dbReference type="PROSITE" id="PS01132">
    <property type="entry name" value="ACTINS_ACT_LIKE"/>
    <property type="match status" value="1"/>
</dbReference>
<comment type="function">
    <text evidence="1">Functions as ATP-binding component of the Arp2/3 complex which is involved in regulation of actin polymerization and together with an activating nucleation-promoting factor (NPF) mediates the formation of branched actin networks. Seems to contact the pointed end of the daughter actin filament (By similarity).</text>
</comment>
<comment type="subunit">
    <text evidence="4">Component of the Arp2/3 complex composed of ARP2, ARP3, ARC40/p41-ARC, ARC35/p34-ARC, ARC18/p21-ARC, ARC19/p20-ARC and ARC16/p16-ARC.</text>
</comment>
<comment type="interaction">
    <interactant intactId="EBI-2927">
        <id>P32381</id>
    </interactant>
    <interactant intactId="EBI-2764">
        <id>Q05933</id>
        <label>ARC18</label>
    </interactant>
    <organismsDiffer>false</organismsDiffer>
    <experiments>8</experiments>
</comment>
<comment type="interaction">
    <interactant intactId="EBI-2927">
        <id>P32381</id>
    </interactant>
    <interactant intactId="EBI-2770">
        <id>P53731</id>
        <label>ARC35</label>
    </interactant>
    <organismsDiffer>false</organismsDiffer>
    <experiments>7</experiments>
</comment>
<comment type="interaction">
    <interactant intactId="EBI-2927">
        <id>P32381</id>
    </interactant>
    <interactant intactId="EBI-2777">
        <id>P38328</id>
        <label>ARC40</label>
    </interactant>
    <organismsDiffer>false</organismsDiffer>
    <experiments>7</experiments>
</comment>
<comment type="subcellular location">
    <subcellularLocation>
        <location evidence="2 4">Cytoplasm</location>
        <location evidence="2 4">Cytoskeleton</location>
        <location evidence="2 4">Actin patch</location>
    </subcellularLocation>
</comment>
<comment type="miscellaneous">
    <text evidence="3">Present with 6650 molecules/cell in log phase SD medium.</text>
</comment>
<comment type="similarity">
    <text evidence="5">Belongs to the actin family. ARP2 subfamily.</text>
</comment>
<gene>
    <name type="primary">ARP2</name>
    <name type="synonym">ACT2</name>
    <name type="ordered locus">YDL029W</name>
    <name type="ORF">D2778</name>
</gene>
<sequence length="391" mass="44074">MDPHNPIVLDQGTGFVKIGRAGENFPDYTFPSIVGRPILRAEERASVATPLKDIMIGDEASEVRSYLQISYPMENGIIKNWTDMELLWDYAFFEQMKLPSTSNGKILLTEPPMNPLKNREKMCEVMFEKYDFGGVYVAIQAVLALYAQGLSSGVVVDSGDGVTHIVPVYESVVLSHLTRRLDVAGRDVTRHLIDLLSRRGYAFNRTADFETVRQIKEKLCYVSYDLDLDTKLARETTALVESYELPDGRTIKVGQERFEAPECLFQPGLVDVEQPGVGELLFNTVQSADVDIRSSLYKAIVLSGGSSMYPGLPSRLEKELKQLWFSRVLHNDPSRLDKFKVRIEDPPRRKHMVFIGGAVLASIMADKDHMWLSKQEWQESGPSAMTKFGPR</sequence>
<accession>P32381</accession>
<accession>D6VRW3</accession>